<feature type="chain" id="PRO_1000185804" description="Bifunctional protein HldE">
    <location>
        <begin position="1"/>
        <end position="477"/>
    </location>
</feature>
<feature type="region of interest" description="Ribokinase">
    <location>
        <begin position="1"/>
        <end position="318"/>
    </location>
</feature>
<feature type="region of interest" description="Cytidylyltransferase">
    <location>
        <begin position="344"/>
        <end position="477"/>
    </location>
</feature>
<feature type="active site" evidence="1">
    <location>
        <position position="264"/>
    </location>
</feature>
<feature type="binding site" evidence="1">
    <location>
        <begin position="195"/>
        <end position="198"/>
    </location>
    <ligand>
        <name>ATP</name>
        <dbReference type="ChEBI" id="CHEBI:30616"/>
    </ligand>
</feature>
<feature type="modified residue" description="N6-acetyllysine" evidence="1">
    <location>
        <position position="179"/>
    </location>
</feature>
<dbReference type="EC" id="2.7.1.167" evidence="1"/>
<dbReference type="EC" id="2.7.7.70" evidence="1"/>
<dbReference type="EMBL" id="CU928162">
    <property type="protein sequence ID" value="CAR09869.2"/>
    <property type="molecule type" value="Genomic_DNA"/>
</dbReference>
<dbReference type="RefSeq" id="WP_000869177.1">
    <property type="nucleotide sequence ID" value="NC_011745.1"/>
</dbReference>
<dbReference type="SMR" id="B7N0K1"/>
<dbReference type="KEGG" id="ecq:ECED1_3720"/>
<dbReference type="HOGENOM" id="CLU_021150_2_1_6"/>
<dbReference type="UniPathway" id="UPA00356">
    <property type="reaction ID" value="UER00437"/>
</dbReference>
<dbReference type="UniPathway" id="UPA00356">
    <property type="reaction ID" value="UER00439"/>
</dbReference>
<dbReference type="Proteomes" id="UP000000748">
    <property type="component" value="Chromosome"/>
</dbReference>
<dbReference type="GO" id="GO:0005829">
    <property type="term" value="C:cytosol"/>
    <property type="evidence" value="ECO:0007669"/>
    <property type="project" value="TreeGrafter"/>
</dbReference>
<dbReference type="GO" id="GO:0005524">
    <property type="term" value="F:ATP binding"/>
    <property type="evidence" value="ECO:0007669"/>
    <property type="project" value="UniProtKB-UniRule"/>
</dbReference>
<dbReference type="GO" id="GO:0033785">
    <property type="term" value="F:heptose 7-phosphate kinase activity"/>
    <property type="evidence" value="ECO:0007669"/>
    <property type="project" value="UniProtKB-UniRule"/>
</dbReference>
<dbReference type="GO" id="GO:0033786">
    <property type="term" value="F:heptose-1-phosphate adenylyltransferase activity"/>
    <property type="evidence" value="ECO:0007669"/>
    <property type="project" value="UniProtKB-UniRule"/>
</dbReference>
<dbReference type="GO" id="GO:0016773">
    <property type="term" value="F:phosphotransferase activity, alcohol group as acceptor"/>
    <property type="evidence" value="ECO:0007669"/>
    <property type="project" value="InterPro"/>
</dbReference>
<dbReference type="GO" id="GO:0097171">
    <property type="term" value="P:ADP-L-glycero-beta-D-manno-heptose biosynthetic process"/>
    <property type="evidence" value="ECO:0007669"/>
    <property type="project" value="UniProtKB-UniPathway"/>
</dbReference>
<dbReference type="CDD" id="cd01172">
    <property type="entry name" value="RfaE_like"/>
    <property type="match status" value="1"/>
</dbReference>
<dbReference type="FunFam" id="3.40.1190.20:FF:000002">
    <property type="entry name" value="Bifunctional protein HldE"/>
    <property type="match status" value="1"/>
</dbReference>
<dbReference type="FunFam" id="3.40.50.620:FF:000028">
    <property type="entry name" value="Bifunctional protein HldE"/>
    <property type="match status" value="1"/>
</dbReference>
<dbReference type="Gene3D" id="3.40.1190.20">
    <property type="match status" value="1"/>
</dbReference>
<dbReference type="Gene3D" id="3.40.50.620">
    <property type="entry name" value="HUPs"/>
    <property type="match status" value="1"/>
</dbReference>
<dbReference type="HAMAP" id="MF_01603">
    <property type="entry name" value="HldE"/>
    <property type="match status" value="1"/>
</dbReference>
<dbReference type="InterPro" id="IPR023030">
    <property type="entry name" value="Bifunc_HldE"/>
</dbReference>
<dbReference type="InterPro" id="IPR002173">
    <property type="entry name" value="Carboh/pur_kinase_PfkB_CS"/>
</dbReference>
<dbReference type="InterPro" id="IPR004821">
    <property type="entry name" value="Cyt_trans-like"/>
</dbReference>
<dbReference type="InterPro" id="IPR011611">
    <property type="entry name" value="PfkB_dom"/>
</dbReference>
<dbReference type="InterPro" id="IPR011913">
    <property type="entry name" value="RfaE_dom_I"/>
</dbReference>
<dbReference type="InterPro" id="IPR011914">
    <property type="entry name" value="RfaE_dom_II"/>
</dbReference>
<dbReference type="InterPro" id="IPR029056">
    <property type="entry name" value="Ribokinase-like"/>
</dbReference>
<dbReference type="InterPro" id="IPR014729">
    <property type="entry name" value="Rossmann-like_a/b/a_fold"/>
</dbReference>
<dbReference type="NCBIfam" id="TIGR00125">
    <property type="entry name" value="cyt_tran_rel"/>
    <property type="match status" value="1"/>
</dbReference>
<dbReference type="NCBIfam" id="NF008454">
    <property type="entry name" value="PRK11316.1"/>
    <property type="match status" value="1"/>
</dbReference>
<dbReference type="NCBIfam" id="TIGR02198">
    <property type="entry name" value="rfaE_dom_I"/>
    <property type="match status" value="1"/>
</dbReference>
<dbReference type="NCBIfam" id="TIGR02199">
    <property type="entry name" value="rfaE_dom_II"/>
    <property type="match status" value="1"/>
</dbReference>
<dbReference type="PANTHER" id="PTHR46969">
    <property type="entry name" value="BIFUNCTIONAL PROTEIN HLDE"/>
    <property type="match status" value="1"/>
</dbReference>
<dbReference type="PANTHER" id="PTHR46969:SF1">
    <property type="entry name" value="BIFUNCTIONAL PROTEIN HLDE"/>
    <property type="match status" value="1"/>
</dbReference>
<dbReference type="Pfam" id="PF01467">
    <property type="entry name" value="CTP_transf_like"/>
    <property type="match status" value="1"/>
</dbReference>
<dbReference type="Pfam" id="PF00294">
    <property type="entry name" value="PfkB"/>
    <property type="match status" value="1"/>
</dbReference>
<dbReference type="SUPFAM" id="SSF52374">
    <property type="entry name" value="Nucleotidylyl transferase"/>
    <property type="match status" value="1"/>
</dbReference>
<dbReference type="SUPFAM" id="SSF53613">
    <property type="entry name" value="Ribokinase-like"/>
    <property type="match status" value="1"/>
</dbReference>
<dbReference type="PROSITE" id="PS00583">
    <property type="entry name" value="PFKB_KINASES_1"/>
    <property type="match status" value="1"/>
</dbReference>
<sequence>MKVTLPEFERAGVMVVGDVMLDRYWYGPTSRISPEAPVPVVKVNTIEERPGGAANVAMNIASLGANARLVGLTGIDDAARALSKSLADVNVKCDFVSVPTHPTITKLRVLSRNQQLIRLDFEEGFEGVDPQPLHERINQALSSIGALVLSDYAKGALASVQQMIQLARKAGVPVLIDPKGTDFERYRGATLLTPNLSEFEAVVGKCKTEEEIVERGMKLIADYELSALLVTRSEQGMSLLQPGKAPLHMPTQAQEVYDVTGAGDTVIGVLAATLAAGNSLEEACFFANAAAGVVVGKLGTSTVSPIELENAVRGRADTGFGVMTEEELKLAVAAARKRGEKVVMTNGVFDILHAGHVSYLANARKLGDRLIVAVNSDASTKRLKGDSRPVNPLEQRMIVLGALEAVDWVVSFEEDTPQRLIAGILPDLLVKGGDYKPEEIAGSKEVWANGGEVLVLNFEDGCSTTNIIKKIQLDKKG</sequence>
<gene>
    <name evidence="1" type="primary">hldE</name>
    <name type="ordered locus">ECED1_3720</name>
</gene>
<proteinExistence type="inferred from homology"/>
<evidence type="ECO:0000255" key="1">
    <source>
        <dbReference type="HAMAP-Rule" id="MF_01603"/>
    </source>
</evidence>
<organism>
    <name type="scientific">Escherichia coli O81 (strain ED1a)</name>
    <dbReference type="NCBI Taxonomy" id="585397"/>
    <lineage>
        <taxon>Bacteria</taxon>
        <taxon>Pseudomonadati</taxon>
        <taxon>Pseudomonadota</taxon>
        <taxon>Gammaproteobacteria</taxon>
        <taxon>Enterobacterales</taxon>
        <taxon>Enterobacteriaceae</taxon>
        <taxon>Escherichia</taxon>
    </lineage>
</organism>
<reference key="1">
    <citation type="journal article" date="2009" name="PLoS Genet.">
        <title>Organised genome dynamics in the Escherichia coli species results in highly diverse adaptive paths.</title>
        <authorList>
            <person name="Touchon M."/>
            <person name="Hoede C."/>
            <person name="Tenaillon O."/>
            <person name="Barbe V."/>
            <person name="Baeriswyl S."/>
            <person name="Bidet P."/>
            <person name="Bingen E."/>
            <person name="Bonacorsi S."/>
            <person name="Bouchier C."/>
            <person name="Bouvet O."/>
            <person name="Calteau A."/>
            <person name="Chiapello H."/>
            <person name="Clermont O."/>
            <person name="Cruveiller S."/>
            <person name="Danchin A."/>
            <person name="Diard M."/>
            <person name="Dossat C."/>
            <person name="Karoui M.E."/>
            <person name="Frapy E."/>
            <person name="Garry L."/>
            <person name="Ghigo J.M."/>
            <person name="Gilles A.M."/>
            <person name="Johnson J."/>
            <person name="Le Bouguenec C."/>
            <person name="Lescat M."/>
            <person name="Mangenot S."/>
            <person name="Martinez-Jehanne V."/>
            <person name="Matic I."/>
            <person name="Nassif X."/>
            <person name="Oztas S."/>
            <person name="Petit M.A."/>
            <person name="Pichon C."/>
            <person name="Rouy Z."/>
            <person name="Ruf C.S."/>
            <person name="Schneider D."/>
            <person name="Tourret J."/>
            <person name="Vacherie B."/>
            <person name="Vallenet D."/>
            <person name="Medigue C."/>
            <person name="Rocha E.P.C."/>
            <person name="Denamur E."/>
        </authorList>
    </citation>
    <scope>NUCLEOTIDE SEQUENCE [LARGE SCALE GENOMIC DNA]</scope>
    <source>
        <strain>ED1a</strain>
    </source>
</reference>
<comment type="function">
    <text evidence="1">Catalyzes the phosphorylation of D-glycero-D-manno-heptose 7-phosphate at the C-1 position to selectively form D-glycero-beta-D-manno-heptose-1,7-bisphosphate.</text>
</comment>
<comment type="function">
    <text evidence="1">Catalyzes the ADP transfer from ATP to D-glycero-beta-D-manno-heptose 1-phosphate, yielding ADP-D-glycero-beta-D-manno-heptose.</text>
</comment>
<comment type="catalytic activity">
    <reaction evidence="1">
        <text>D-glycero-beta-D-manno-heptose 7-phosphate + ATP = D-glycero-beta-D-manno-heptose 1,7-bisphosphate + ADP + H(+)</text>
        <dbReference type="Rhea" id="RHEA:27473"/>
        <dbReference type="ChEBI" id="CHEBI:15378"/>
        <dbReference type="ChEBI" id="CHEBI:30616"/>
        <dbReference type="ChEBI" id="CHEBI:60204"/>
        <dbReference type="ChEBI" id="CHEBI:60208"/>
        <dbReference type="ChEBI" id="CHEBI:456216"/>
        <dbReference type="EC" id="2.7.1.167"/>
    </reaction>
</comment>
<comment type="catalytic activity">
    <reaction evidence="1">
        <text>D-glycero-beta-D-manno-heptose 1-phosphate + ATP + H(+) = ADP-D-glycero-beta-D-manno-heptose + diphosphate</text>
        <dbReference type="Rhea" id="RHEA:27465"/>
        <dbReference type="ChEBI" id="CHEBI:15378"/>
        <dbReference type="ChEBI" id="CHEBI:30616"/>
        <dbReference type="ChEBI" id="CHEBI:33019"/>
        <dbReference type="ChEBI" id="CHEBI:59967"/>
        <dbReference type="ChEBI" id="CHEBI:61593"/>
        <dbReference type="EC" id="2.7.7.70"/>
    </reaction>
</comment>
<comment type="pathway">
    <text evidence="1">Nucleotide-sugar biosynthesis; ADP-L-glycero-beta-D-manno-heptose biosynthesis; ADP-L-glycero-beta-D-manno-heptose from D-glycero-beta-D-manno-heptose 7-phosphate: step 1/4.</text>
</comment>
<comment type="pathway">
    <text evidence="1">Nucleotide-sugar biosynthesis; ADP-L-glycero-beta-D-manno-heptose biosynthesis; ADP-L-glycero-beta-D-manno-heptose from D-glycero-beta-D-manno-heptose 7-phosphate: step 3/4.</text>
</comment>
<comment type="subunit">
    <text evidence="1">Homodimer.</text>
</comment>
<comment type="similarity">
    <text evidence="1">In the N-terminal section; belongs to the carbohydrate kinase PfkB family.</text>
</comment>
<comment type="similarity">
    <text evidence="1">In the C-terminal section; belongs to the cytidylyltransferase family.</text>
</comment>
<protein>
    <recommendedName>
        <fullName evidence="1">Bifunctional protein HldE</fullName>
    </recommendedName>
    <domain>
        <recommendedName>
            <fullName evidence="1">D-beta-D-heptose 7-phosphate kinase</fullName>
            <ecNumber evidence="1">2.7.1.167</ecNumber>
        </recommendedName>
        <alternativeName>
            <fullName evidence="1">D-beta-D-heptose 7-phosphotransferase</fullName>
        </alternativeName>
        <alternativeName>
            <fullName evidence="1">D-glycero-beta-D-manno-heptose-7-phosphate kinase</fullName>
        </alternativeName>
    </domain>
    <domain>
        <recommendedName>
            <fullName evidence="1">D-beta-D-heptose 1-phosphate adenylyltransferase</fullName>
            <ecNumber evidence="1">2.7.7.70</ecNumber>
        </recommendedName>
        <alternativeName>
            <fullName evidence="1">D-glycero-beta-D-manno-heptose 1-phosphate adenylyltransferase</fullName>
        </alternativeName>
    </domain>
</protein>
<accession>B7N0K1</accession>
<name>HLDE_ECO81</name>
<keyword id="KW-0007">Acetylation</keyword>
<keyword id="KW-0067">ATP-binding</keyword>
<keyword id="KW-0119">Carbohydrate metabolism</keyword>
<keyword id="KW-0418">Kinase</keyword>
<keyword id="KW-0511">Multifunctional enzyme</keyword>
<keyword id="KW-0547">Nucleotide-binding</keyword>
<keyword id="KW-0548">Nucleotidyltransferase</keyword>
<keyword id="KW-0808">Transferase</keyword>